<protein>
    <recommendedName>
        <fullName>Transmembrane protein 168-A</fullName>
    </recommendedName>
</protein>
<evidence type="ECO:0000250" key="1">
    <source>
        <dbReference type="UniProtKB" id="Q91VX9"/>
    </source>
</evidence>
<evidence type="ECO:0000250" key="2">
    <source>
        <dbReference type="UniProtKB" id="Q9H0V1"/>
    </source>
</evidence>
<evidence type="ECO:0000255" key="3"/>
<evidence type="ECO:0000305" key="4"/>
<organism>
    <name type="scientific">Danio rerio</name>
    <name type="common">Zebrafish</name>
    <name type="synonym">Brachydanio rerio</name>
    <dbReference type="NCBI Taxonomy" id="7955"/>
    <lineage>
        <taxon>Eukaryota</taxon>
        <taxon>Metazoa</taxon>
        <taxon>Chordata</taxon>
        <taxon>Craniata</taxon>
        <taxon>Vertebrata</taxon>
        <taxon>Euteleostomi</taxon>
        <taxon>Actinopterygii</taxon>
        <taxon>Neopterygii</taxon>
        <taxon>Teleostei</taxon>
        <taxon>Ostariophysi</taxon>
        <taxon>Cypriniformes</taxon>
        <taxon>Danionidae</taxon>
        <taxon>Danioninae</taxon>
        <taxon>Danio</taxon>
    </lineage>
</organism>
<sequence length="681" mass="76577">MSGQEKSDKSVDMWSFLRCLGYLSSFNLLVAVCLGMYVRWEQTSEPMILVLFILGLFVSAIACILYYYFSMESASLSLFHLWFGFLQGLLCFLNSPSLEDEIKEQVTNYLLLSSVSIRTLWALTERLCANPKYKPVVITSSELLELLGFGVASISLVFDKSLAMIALTFALTALIIDLRMKSPLALPNLACFSVIAAVTFFQSLKIQTNPFALSCYLGRLICEPLLDVYFSSLTATERWKQFLSAGRLWRRFSLFPLALVELLFFVVCAFKLGNLKDWYLVIPGFCIFGLLWILCHMVFLVTLWCFHTKLSECQKMWAAQRLQTLNLDRIMASRGMRHFCLISERLVLFCLMSTIILGAVSWQVANGLFMSVFLVVLPLESLAHGLFHELGNGLGGTCVGYAVVIPTCYSSADGQPVLLPPGQVQELHSTSTLNAVQRLFSHHLIQTFGCDYSTSLSLETLLVKLRSFLELCTAEGPRHDTYILYYSGHTLPSGDWTLAGGDYLRMKQILDMWREQNSSFSSRLILVLDTENSAPWVKAVRKVEGMYVAVQGAKLSPVQDAEGQDAPRLGDFTSEWVKYNCDPESGVQWSERGRVISAIYGVSKPWSDYALHLPTGSDVAKHWKTHFPKTTYPLVAVANWCCGLNLLWLCSVCLRCVRRLKLSWFPPSILDTGQGIKLVRS</sequence>
<comment type="function">
    <text evidence="1">Plays a key role in maintaining the cardiac electrical stability by modulating cell surface expression of SCN5A.</text>
</comment>
<comment type="subcellular location">
    <subcellularLocation>
        <location evidence="2">Nucleus membrane</location>
        <topology evidence="3">Multi-pass membrane protein</topology>
    </subcellularLocation>
</comment>
<comment type="similarity">
    <text evidence="4">Belongs to the TMEM168 family.</text>
</comment>
<gene>
    <name type="primary">tmem168a</name>
    <name type="ORF">si:dkey-192l17.1</name>
</gene>
<dbReference type="EMBL" id="BX950217">
    <property type="protein sequence ID" value="CAK05342.1"/>
    <property type="molecule type" value="Genomic_DNA"/>
</dbReference>
<dbReference type="RefSeq" id="NP_001076555.1">
    <property type="nucleotide sequence ID" value="NM_001083086.1"/>
</dbReference>
<dbReference type="RefSeq" id="XP_005165052.1">
    <property type="nucleotide sequence ID" value="XM_005164995.5"/>
</dbReference>
<dbReference type="FunCoup" id="Q1LUD1">
    <property type="interactions" value="4"/>
</dbReference>
<dbReference type="STRING" id="7955.ENSDARP00000125427"/>
<dbReference type="GlyCosmos" id="Q1LUD1">
    <property type="glycosylation" value="1 site, No reported glycans"/>
</dbReference>
<dbReference type="PaxDb" id="7955-ENSDARP00000125427"/>
<dbReference type="Ensembl" id="ENSDART00000150389">
    <property type="protein sequence ID" value="ENSDARP00000125427"/>
    <property type="gene ID" value="ENSDARG00000068705"/>
</dbReference>
<dbReference type="Ensembl" id="ENSDART00000184175">
    <property type="protein sequence ID" value="ENSDARP00000153111"/>
    <property type="gene ID" value="ENSDARG00000068705"/>
</dbReference>
<dbReference type="GeneID" id="100034546"/>
<dbReference type="KEGG" id="dre:100034546"/>
<dbReference type="AGR" id="ZFIN:ZDB-GENE-050419-97"/>
<dbReference type="CTD" id="100034546"/>
<dbReference type="ZFIN" id="ZDB-GENE-050419-97">
    <property type="gene designation" value="tmem168a"/>
</dbReference>
<dbReference type="eggNOG" id="ENOG502QRB6">
    <property type="taxonomic scope" value="Eukaryota"/>
</dbReference>
<dbReference type="HOGENOM" id="CLU_032315_0_0_1"/>
<dbReference type="InParanoid" id="Q1LUD1"/>
<dbReference type="OMA" id="PSERWMP"/>
<dbReference type="OrthoDB" id="5967342at2759"/>
<dbReference type="PhylomeDB" id="Q1LUD1"/>
<dbReference type="TreeFam" id="TF328518"/>
<dbReference type="PRO" id="PR:Q1LUD1"/>
<dbReference type="Proteomes" id="UP000000437">
    <property type="component" value="Chromosome 4"/>
</dbReference>
<dbReference type="Bgee" id="ENSDARG00000068705">
    <property type="expression patterns" value="Expressed in mature ovarian follicle and 20 other cell types or tissues"/>
</dbReference>
<dbReference type="GO" id="GO:0031965">
    <property type="term" value="C:nuclear membrane"/>
    <property type="evidence" value="ECO:0000250"/>
    <property type="project" value="UniProtKB"/>
</dbReference>
<dbReference type="GO" id="GO:0017080">
    <property type="term" value="F:sodium channel regulator activity"/>
    <property type="evidence" value="ECO:0000250"/>
    <property type="project" value="UniProtKB"/>
</dbReference>
<dbReference type="CDD" id="cd21494">
    <property type="entry name" value="TMEM168"/>
    <property type="match status" value="1"/>
</dbReference>
<dbReference type="InterPro" id="IPR029713">
    <property type="entry name" value="TMEM168"/>
</dbReference>
<dbReference type="PANTHER" id="PTHR14437">
    <property type="entry name" value="TRANSMEMBRANE PROTEIN 168"/>
    <property type="match status" value="1"/>
</dbReference>
<dbReference type="PANTHER" id="PTHR14437:SF4">
    <property type="entry name" value="TRANSMEMBRANE PROTEIN 168-A"/>
    <property type="match status" value="1"/>
</dbReference>
<accession>Q1LUD1</accession>
<name>TM168_DANRE</name>
<reference key="1">
    <citation type="journal article" date="2013" name="Nature">
        <title>The zebrafish reference genome sequence and its relationship to the human genome.</title>
        <authorList>
            <person name="Howe K."/>
            <person name="Clark M.D."/>
            <person name="Torroja C.F."/>
            <person name="Torrance J."/>
            <person name="Berthelot C."/>
            <person name="Muffato M."/>
            <person name="Collins J.E."/>
            <person name="Humphray S."/>
            <person name="McLaren K."/>
            <person name="Matthews L."/>
            <person name="McLaren S."/>
            <person name="Sealy I."/>
            <person name="Caccamo M."/>
            <person name="Churcher C."/>
            <person name="Scott C."/>
            <person name="Barrett J.C."/>
            <person name="Koch R."/>
            <person name="Rauch G.J."/>
            <person name="White S."/>
            <person name="Chow W."/>
            <person name="Kilian B."/>
            <person name="Quintais L.T."/>
            <person name="Guerra-Assuncao J.A."/>
            <person name="Zhou Y."/>
            <person name="Gu Y."/>
            <person name="Yen J."/>
            <person name="Vogel J.H."/>
            <person name="Eyre T."/>
            <person name="Redmond S."/>
            <person name="Banerjee R."/>
            <person name="Chi J."/>
            <person name="Fu B."/>
            <person name="Langley E."/>
            <person name="Maguire S.F."/>
            <person name="Laird G.K."/>
            <person name="Lloyd D."/>
            <person name="Kenyon E."/>
            <person name="Donaldson S."/>
            <person name="Sehra H."/>
            <person name="Almeida-King J."/>
            <person name="Loveland J."/>
            <person name="Trevanion S."/>
            <person name="Jones M."/>
            <person name="Quail M."/>
            <person name="Willey D."/>
            <person name="Hunt A."/>
            <person name="Burton J."/>
            <person name="Sims S."/>
            <person name="McLay K."/>
            <person name="Plumb B."/>
            <person name="Davis J."/>
            <person name="Clee C."/>
            <person name="Oliver K."/>
            <person name="Clark R."/>
            <person name="Riddle C."/>
            <person name="Elliot D."/>
            <person name="Threadgold G."/>
            <person name="Harden G."/>
            <person name="Ware D."/>
            <person name="Begum S."/>
            <person name="Mortimore B."/>
            <person name="Kerry G."/>
            <person name="Heath P."/>
            <person name="Phillimore B."/>
            <person name="Tracey A."/>
            <person name="Corby N."/>
            <person name="Dunn M."/>
            <person name="Johnson C."/>
            <person name="Wood J."/>
            <person name="Clark S."/>
            <person name="Pelan S."/>
            <person name="Griffiths G."/>
            <person name="Smith M."/>
            <person name="Glithero R."/>
            <person name="Howden P."/>
            <person name="Barker N."/>
            <person name="Lloyd C."/>
            <person name="Stevens C."/>
            <person name="Harley J."/>
            <person name="Holt K."/>
            <person name="Panagiotidis G."/>
            <person name="Lovell J."/>
            <person name="Beasley H."/>
            <person name="Henderson C."/>
            <person name="Gordon D."/>
            <person name="Auger K."/>
            <person name="Wright D."/>
            <person name="Collins J."/>
            <person name="Raisen C."/>
            <person name="Dyer L."/>
            <person name="Leung K."/>
            <person name="Robertson L."/>
            <person name="Ambridge K."/>
            <person name="Leongamornlert D."/>
            <person name="McGuire S."/>
            <person name="Gilderthorp R."/>
            <person name="Griffiths C."/>
            <person name="Manthravadi D."/>
            <person name="Nichol S."/>
            <person name="Barker G."/>
            <person name="Whitehead S."/>
            <person name="Kay M."/>
            <person name="Brown J."/>
            <person name="Murnane C."/>
            <person name="Gray E."/>
            <person name="Humphries M."/>
            <person name="Sycamore N."/>
            <person name="Barker D."/>
            <person name="Saunders D."/>
            <person name="Wallis J."/>
            <person name="Babbage A."/>
            <person name="Hammond S."/>
            <person name="Mashreghi-Mohammadi M."/>
            <person name="Barr L."/>
            <person name="Martin S."/>
            <person name="Wray P."/>
            <person name="Ellington A."/>
            <person name="Matthews N."/>
            <person name="Ellwood M."/>
            <person name="Woodmansey R."/>
            <person name="Clark G."/>
            <person name="Cooper J."/>
            <person name="Tromans A."/>
            <person name="Grafham D."/>
            <person name="Skuce C."/>
            <person name="Pandian R."/>
            <person name="Andrews R."/>
            <person name="Harrison E."/>
            <person name="Kimberley A."/>
            <person name="Garnett J."/>
            <person name="Fosker N."/>
            <person name="Hall R."/>
            <person name="Garner P."/>
            <person name="Kelly D."/>
            <person name="Bird C."/>
            <person name="Palmer S."/>
            <person name="Gehring I."/>
            <person name="Berger A."/>
            <person name="Dooley C.M."/>
            <person name="Ersan-Urun Z."/>
            <person name="Eser C."/>
            <person name="Geiger H."/>
            <person name="Geisler M."/>
            <person name="Karotki L."/>
            <person name="Kirn A."/>
            <person name="Konantz J."/>
            <person name="Konantz M."/>
            <person name="Oberlander M."/>
            <person name="Rudolph-Geiger S."/>
            <person name="Teucke M."/>
            <person name="Lanz C."/>
            <person name="Raddatz G."/>
            <person name="Osoegawa K."/>
            <person name="Zhu B."/>
            <person name="Rapp A."/>
            <person name="Widaa S."/>
            <person name="Langford C."/>
            <person name="Yang F."/>
            <person name="Schuster S.C."/>
            <person name="Carter N.P."/>
            <person name="Harrow J."/>
            <person name="Ning Z."/>
            <person name="Herrero J."/>
            <person name="Searle S.M."/>
            <person name="Enright A."/>
            <person name="Geisler R."/>
            <person name="Plasterk R.H."/>
            <person name="Lee C."/>
            <person name="Westerfield M."/>
            <person name="de Jong P.J."/>
            <person name="Zon L.I."/>
            <person name="Postlethwait J.H."/>
            <person name="Nusslein-Volhard C."/>
            <person name="Hubbard T.J."/>
            <person name="Roest Crollius H."/>
            <person name="Rogers J."/>
            <person name="Stemple D.L."/>
        </authorList>
    </citation>
    <scope>NUCLEOTIDE SEQUENCE [LARGE SCALE GENOMIC DNA]</scope>
    <source>
        <strain>Tuebingen</strain>
    </source>
</reference>
<proteinExistence type="inferred from homology"/>
<keyword id="KW-0325">Glycoprotein</keyword>
<keyword id="KW-0472">Membrane</keyword>
<keyword id="KW-0539">Nucleus</keyword>
<keyword id="KW-1185">Reference proteome</keyword>
<keyword id="KW-0812">Transmembrane</keyword>
<keyword id="KW-1133">Transmembrane helix</keyword>
<feature type="chain" id="PRO_0000284634" description="Transmembrane protein 168-A">
    <location>
        <begin position="1"/>
        <end position="681"/>
    </location>
</feature>
<feature type="transmembrane region" description="Helical" evidence="3">
    <location>
        <begin position="16"/>
        <end position="36"/>
    </location>
</feature>
<feature type="transmembrane region" description="Helical" evidence="3">
    <location>
        <begin position="47"/>
        <end position="67"/>
    </location>
</feature>
<feature type="transmembrane region" description="Helical" evidence="3">
    <location>
        <begin position="73"/>
        <end position="93"/>
    </location>
</feature>
<feature type="transmembrane region" description="Helical" evidence="3">
    <location>
        <begin position="135"/>
        <end position="155"/>
    </location>
</feature>
<feature type="transmembrane region" description="Helical" evidence="3">
    <location>
        <begin position="156"/>
        <end position="176"/>
    </location>
</feature>
<feature type="transmembrane region" description="Helical" evidence="3">
    <location>
        <begin position="184"/>
        <end position="204"/>
    </location>
</feature>
<feature type="transmembrane region" description="Helical" evidence="3">
    <location>
        <begin position="252"/>
        <end position="272"/>
    </location>
</feature>
<feature type="transmembrane region" description="Helical" evidence="3">
    <location>
        <begin position="281"/>
        <end position="301"/>
    </location>
</feature>
<feature type="transmembrane region" description="Helical" evidence="3">
    <location>
        <begin position="346"/>
        <end position="365"/>
    </location>
</feature>
<feature type="glycosylation site" description="N-linked (GlcNAc...) asparagine" evidence="3">
    <location>
        <position position="517"/>
    </location>
</feature>